<name>GCH1_RHOBA</name>
<protein>
    <recommendedName>
        <fullName evidence="2">GTP cyclohydrolase 1</fullName>
        <ecNumber evidence="2">3.5.4.16</ecNumber>
    </recommendedName>
    <alternativeName>
        <fullName evidence="2">GTP cyclohydrolase I</fullName>
        <shortName evidence="2">GTP-CH-I</shortName>
    </alternativeName>
</protein>
<dbReference type="EC" id="3.5.4.16" evidence="2"/>
<dbReference type="EMBL" id="BX294154">
    <property type="protein sequence ID" value="CAD77261.1"/>
    <property type="molecule type" value="Genomic_DNA"/>
</dbReference>
<dbReference type="RefSeq" id="NP_870186.1">
    <property type="nucleotide sequence ID" value="NC_005027.1"/>
</dbReference>
<dbReference type="SMR" id="Q7UJJ7"/>
<dbReference type="FunCoup" id="Q7UJJ7">
    <property type="interactions" value="430"/>
</dbReference>
<dbReference type="STRING" id="243090.RB11853"/>
<dbReference type="EnsemblBacteria" id="CAD77261">
    <property type="protein sequence ID" value="CAD77261"/>
    <property type="gene ID" value="RB11853"/>
</dbReference>
<dbReference type="KEGG" id="rba:RB11853"/>
<dbReference type="PATRIC" id="fig|243090.15.peg.5716"/>
<dbReference type="eggNOG" id="COG0302">
    <property type="taxonomic scope" value="Bacteria"/>
</dbReference>
<dbReference type="HOGENOM" id="CLU_049768_3_1_0"/>
<dbReference type="InParanoid" id="Q7UJJ7"/>
<dbReference type="OrthoDB" id="9801207at2"/>
<dbReference type="UniPathway" id="UPA00848">
    <property type="reaction ID" value="UER00151"/>
</dbReference>
<dbReference type="Proteomes" id="UP000001025">
    <property type="component" value="Chromosome"/>
</dbReference>
<dbReference type="GO" id="GO:0005737">
    <property type="term" value="C:cytoplasm"/>
    <property type="evidence" value="ECO:0000318"/>
    <property type="project" value="GO_Central"/>
</dbReference>
<dbReference type="GO" id="GO:0005525">
    <property type="term" value="F:GTP binding"/>
    <property type="evidence" value="ECO:0000318"/>
    <property type="project" value="GO_Central"/>
</dbReference>
<dbReference type="GO" id="GO:0003934">
    <property type="term" value="F:GTP cyclohydrolase I activity"/>
    <property type="evidence" value="ECO:0000318"/>
    <property type="project" value="GO_Central"/>
</dbReference>
<dbReference type="GO" id="GO:0008270">
    <property type="term" value="F:zinc ion binding"/>
    <property type="evidence" value="ECO:0000318"/>
    <property type="project" value="GO_Central"/>
</dbReference>
<dbReference type="GO" id="GO:0006730">
    <property type="term" value="P:one-carbon metabolic process"/>
    <property type="evidence" value="ECO:0007669"/>
    <property type="project" value="UniProtKB-UniRule"/>
</dbReference>
<dbReference type="GO" id="GO:0006729">
    <property type="term" value="P:tetrahydrobiopterin biosynthetic process"/>
    <property type="evidence" value="ECO:0000318"/>
    <property type="project" value="GO_Central"/>
</dbReference>
<dbReference type="GO" id="GO:0046654">
    <property type="term" value="P:tetrahydrofolate biosynthetic process"/>
    <property type="evidence" value="ECO:0007669"/>
    <property type="project" value="UniProtKB-UniRule"/>
</dbReference>
<dbReference type="FunFam" id="1.10.286.10:FF:000001">
    <property type="entry name" value="GTP cyclohydrolase 1"/>
    <property type="match status" value="1"/>
</dbReference>
<dbReference type="FunFam" id="3.30.1130.10:FF:000001">
    <property type="entry name" value="GTP cyclohydrolase 1"/>
    <property type="match status" value="1"/>
</dbReference>
<dbReference type="Gene3D" id="1.10.286.10">
    <property type="match status" value="1"/>
</dbReference>
<dbReference type="Gene3D" id="3.30.1130.10">
    <property type="match status" value="1"/>
</dbReference>
<dbReference type="HAMAP" id="MF_00223">
    <property type="entry name" value="FolE"/>
    <property type="match status" value="1"/>
</dbReference>
<dbReference type="InterPro" id="IPR043133">
    <property type="entry name" value="GTP-CH-I_C/QueF"/>
</dbReference>
<dbReference type="InterPro" id="IPR043134">
    <property type="entry name" value="GTP-CH-I_N"/>
</dbReference>
<dbReference type="InterPro" id="IPR001474">
    <property type="entry name" value="GTP_CycHdrlase_I"/>
</dbReference>
<dbReference type="InterPro" id="IPR018234">
    <property type="entry name" value="GTP_CycHdrlase_I_CS"/>
</dbReference>
<dbReference type="InterPro" id="IPR020602">
    <property type="entry name" value="GTP_CycHdrlase_I_dom"/>
</dbReference>
<dbReference type="NCBIfam" id="TIGR00063">
    <property type="entry name" value="folE"/>
    <property type="match status" value="1"/>
</dbReference>
<dbReference type="NCBIfam" id="NF006825">
    <property type="entry name" value="PRK09347.1-2"/>
    <property type="match status" value="1"/>
</dbReference>
<dbReference type="NCBIfam" id="NF006826">
    <property type="entry name" value="PRK09347.1-3"/>
    <property type="match status" value="1"/>
</dbReference>
<dbReference type="PANTHER" id="PTHR11109:SF7">
    <property type="entry name" value="GTP CYCLOHYDROLASE 1"/>
    <property type="match status" value="1"/>
</dbReference>
<dbReference type="PANTHER" id="PTHR11109">
    <property type="entry name" value="GTP CYCLOHYDROLASE I"/>
    <property type="match status" value="1"/>
</dbReference>
<dbReference type="Pfam" id="PF01227">
    <property type="entry name" value="GTP_cyclohydroI"/>
    <property type="match status" value="1"/>
</dbReference>
<dbReference type="SUPFAM" id="SSF55620">
    <property type="entry name" value="Tetrahydrobiopterin biosynthesis enzymes-like"/>
    <property type="match status" value="1"/>
</dbReference>
<dbReference type="PROSITE" id="PS00859">
    <property type="entry name" value="GTP_CYCLOHYDROL_1_1"/>
    <property type="match status" value="1"/>
</dbReference>
<dbReference type="PROSITE" id="PS00860">
    <property type="entry name" value="GTP_CYCLOHYDROL_1_2"/>
    <property type="match status" value="1"/>
</dbReference>
<keyword id="KW-0342">GTP-binding</keyword>
<keyword id="KW-0378">Hydrolase</keyword>
<keyword id="KW-0479">Metal-binding</keyword>
<keyword id="KW-0547">Nucleotide-binding</keyword>
<keyword id="KW-0554">One-carbon metabolism</keyword>
<keyword id="KW-1185">Reference proteome</keyword>
<keyword id="KW-0862">Zinc</keyword>
<organism>
    <name type="scientific">Rhodopirellula baltica (strain DSM 10527 / NCIMB 13988 / SH1)</name>
    <dbReference type="NCBI Taxonomy" id="243090"/>
    <lineage>
        <taxon>Bacteria</taxon>
        <taxon>Pseudomonadati</taxon>
        <taxon>Planctomycetota</taxon>
        <taxon>Planctomycetia</taxon>
        <taxon>Pirellulales</taxon>
        <taxon>Pirellulaceae</taxon>
        <taxon>Rhodopirellula</taxon>
    </lineage>
</organism>
<evidence type="ECO:0000250" key="1"/>
<evidence type="ECO:0000255" key="2">
    <source>
        <dbReference type="HAMAP-Rule" id="MF_00223"/>
    </source>
</evidence>
<evidence type="ECO:0000256" key="3">
    <source>
        <dbReference type="SAM" id="MobiDB-lite"/>
    </source>
</evidence>
<sequence length="229" mass="25410">MFRESDNTIAPSNQDLNKPVVDKEQPAERTPFFVDKNAPHNEVDFARIESAVREILEAVGEDPDRDGLLETPERVARMYAEMFAGLKSDPGRHLAKVFAEDYDEIVLVRDISFCSMCEHHLLPFTGKAHIAYLPSGKVVGLSKLARVVEEVARRPQVQERLTHTVANLIEDRLSARGVAVVVESTHSCMTMRGIRKPGSLCLTSAMRGAFKTDPKSRAEVLGLINRAAS</sequence>
<proteinExistence type="inferred from homology"/>
<comment type="catalytic activity">
    <reaction evidence="2">
        <text>GTP + H2O = 7,8-dihydroneopterin 3'-triphosphate + formate + H(+)</text>
        <dbReference type="Rhea" id="RHEA:17473"/>
        <dbReference type="ChEBI" id="CHEBI:15377"/>
        <dbReference type="ChEBI" id="CHEBI:15378"/>
        <dbReference type="ChEBI" id="CHEBI:15740"/>
        <dbReference type="ChEBI" id="CHEBI:37565"/>
        <dbReference type="ChEBI" id="CHEBI:58462"/>
        <dbReference type="EC" id="3.5.4.16"/>
    </reaction>
</comment>
<comment type="pathway">
    <text evidence="2">Cofactor biosynthesis; 7,8-dihydroneopterin triphosphate biosynthesis; 7,8-dihydroneopterin triphosphate from GTP: step 1/1.</text>
</comment>
<comment type="subunit">
    <text evidence="1">Toroid-shaped homodecamer, composed of two pentamers of five dimers.</text>
</comment>
<comment type="similarity">
    <text evidence="2">Belongs to the GTP cyclohydrolase I family.</text>
</comment>
<reference key="1">
    <citation type="journal article" date="2003" name="Proc. Natl. Acad. Sci. U.S.A.">
        <title>Complete genome sequence of the marine planctomycete Pirellula sp. strain 1.</title>
        <authorList>
            <person name="Gloeckner F.O."/>
            <person name="Kube M."/>
            <person name="Bauer M."/>
            <person name="Teeling H."/>
            <person name="Lombardot T."/>
            <person name="Ludwig W."/>
            <person name="Gade D."/>
            <person name="Beck A."/>
            <person name="Borzym K."/>
            <person name="Heitmann K."/>
            <person name="Rabus R."/>
            <person name="Schlesner H."/>
            <person name="Amann R."/>
            <person name="Reinhardt R."/>
        </authorList>
    </citation>
    <scope>NUCLEOTIDE SEQUENCE [LARGE SCALE GENOMIC DNA]</scope>
    <source>
        <strain>DSM 10527 / NCIMB 13988 / SH1</strain>
    </source>
</reference>
<accession>Q7UJJ7</accession>
<gene>
    <name evidence="2" type="primary">folE</name>
    <name type="ordered locus">RB11853</name>
</gene>
<feature type="chain" id="PRO_0000119437" description="GTP cyclohydrolase 1">
    <location>
        <begin position="1"/>
        <end position="229"/>
    </location>
</feature>
<feature type="region of interest" description="Disordered" evidence="3">
    <location>
        <begin position="1"/>
        <end position="31"/>
    </location>
</feature>
<feature type="compositionally biased region" description="Polar residues" evidence="3">
    <location>
        <begin position="7"/>
        <end position="16"/>
    </location>
</feature>
<feature type="binding site" evidence="2">
    <location>
        <position position="117"/>
    </location>
    <ligand>
        <name>Zn(2+)</name>
        <dbReference type="ChEBI" id="CHEBI:29105"/>
    </ligand>
</feature>
<feature type="binding site" evidence="2">
    <location>
        <position position="120"/>
    </location>
    <ligand>
        <name>Zn(2+)</name>
        <dbReference type="ChEBI" id="CHEBI:29105"/>
    </ligand>
</feature>
<feature type="binding site" evidence="2">
    <location>
        <position position="188"/>
    </location>
    <ligand>
        <name>Zn(2+)</name>
        <dbReference type="ChEBI" id="CHEBI:29105"/>
    </ligand>
</feature>